<accession>A0LLA3</accession>
<gene>
    <name evidence="1" type="primary">alaS</name>
    <name type="ordered locus">Sfum_2527</name>
</gene>
<reference key="1">
    <citation type="submission" date="2006-10" db="EMBL/GenBank/DDBJ databases">
        <title>Complete sequence of Syntrophobacter fumaroxidans MPOB.</title>
        <authorList>
            <consortium name="US DOE Joint Genome Institute"/>
            <person name="Copeland A."/>
            <person name="Lucas S."/>
            <person name="Lapidus A."/>
            <person name="Barry K."/>
            <person name="Detter J.C."/>
            <person name="Glavina del Rio T."/>
            <person name="Hammon N."/>
            <person name="Israni S."/>
            <person name="Pitluck S."/>
            <person name="Goltsman E.G."/>
            <person name="Martinez M."/>
            <person name="Schmutz J."/>
            <person name="Larimer F."/>
            <person name="Land M."/>
            <person name="Hauser L."/>
            <person name="Kyrpides N."/>
            <person name="Kim E."/>
            <person name="Boone D.R."/>
            <person name="Brockman F."/>
            <person name="Culley D."/>
            <person name="Ferry J."/>
            <person name="Gunsalus R."/>
            <person name="McInerney M.J."/>
            <person name="Morrison M."/>
            <person name="Plugge C."/>
            <person name="Rohlin L."/>
            <person name="Scholten J."/>
            <person name="Sieber J."/>
            <person name="Stams A.J.M."/>
            <person name="Worm P."/>
            <person name="Henstra A.M."/>
            <person name="Richardson P."/>
        </authorList>
    </citation>
    <scope>NUCLEOTIDE SEQUENCE [LARGE SCALE GENOMIC DNA]</scope>
    <source>
        <strain>DSM 10017 / MPOB</strain>
    </source>
</reference>
<sequence length="885" mass="98307">MKASEIRKAFLDFFAQRGHSVVKSSSVIPHDDPSLLFTNAGMVQFKRTFLGEEKRPYNRAATSQKCMRAGGKHNDLENVGRTARHHTFFEMLGNFSFGDYFKEDAVEYAWRFLTEDMGLPREKLYATIHEGDSEMRLGPDEEARGFWARYLPADRILTFPTKDNFWSMGDTGPCGPCSEILIDQGAHVGCGKPDCRPGCDCDRFLELWNLVFMQFNRKEDGTMEPLPKPSIDTGMGLERVAAVIQKVPSNYDTDLFAPMRAKIAELSGYRYGTDPEKDVSVKVIADHGRAAAFLIGDGALPSNEGRGYVLRRVLRRALRHGRFLGLDRPFLSEVAVAVMESMQDAYPELLESRNFITRVILNEEERFNETLDNGLRLLQNEIRRLRDEGAGTIPGALIFKLYDTYGFPIDIITDMARDLDFKVDEAGFADLMEKQKEQSRMHWKGSGEREVSEAYRQLSAEGVSTRFVGYDTLSAQSTIAALVRDGQAVEEAPAGTDVEVVTSETPFYGAAGGQVGDQGVIVGPSSRVIVSDTLKLPGDLIVHVGKVESGRLRVGETVRLEVDQALRGDTALHHTATHLLHSVLRRVLGDHVKQAGSMVAPDRLRFDFTHFAAISRDELAEIERLVNEQIRVNRDLQVREMNLDEALKTGAMALFEEKYGDRVRMVEIPGFSRELCGGTHTHRTGDIGLFVVTQEMSIASGVRRIEALAGRRALDYLGRQQSVLHQAAGLLKAGPFEVAERVEKLLANQKQMEKELEALKSSLTSKRSADLLEQAEEVGGVKVLVMRVEADDPKALREMNDRFKERLSSGVTVLGAHQGDKAFLLVGVTPDLTSRVHAGNLIKEIVKTIGGSGGGRPDMAQAGGNRPEKLQDALDLARKLLRERL</sequence>
<comment type="function">
    <text evidence="1">Catalyzes the attachment of alanine to tRNA(Ala) in a two-step reaction: alanine is first activated by ATP to form Ala-AMP and then transferred to the acceptor end of tRNA(Ala). Also edits incorrectly charged Ser-tRNA(Ala) and Gly-tRNA(Ala) via its editing domain.</text>
</comment>
<comment type="catalytic activity">
    <reaction evidence="1">
        <text>tRNA(Ala) + L-alanine + ATP = L-alanyl-tRNA(Ala) + AMP + diphosphate</text>
        <dbReference type="Rhea" id="RHEA:12540"/>
        <dbReference type="Rhea" id="RHEA-COMP:9657"/>
        <dbReference type="Rhea" id="RHEA-COMP:9923"/>
        <dbReference type="ChEBI" id="CHEBI:30616"/>
        <dbReference type="ChEBI" id="CHEBI:33019"/>
        <dbReference type="ChEBI" id="CHEBI:57972"/>
        <dbReference type="ChEBI" id="CHEBI:78442"/>
        <dbReference type="ChEBI" id="CHEBI:78497"/>
        <dbReference type="ChEBI" id="CHEBI:456215"/>
        <dbReference type="EC" id="6.1.1.7"/>
    </reaction>
</comment>
<comment type="cofactor">
    <cofactor evidence="1">
        <name>Zn(2+)</name>
        <dbReference type="ChEBI" id="CHEBI:29105"/>
    </cofactor>
    <text evidence="1">Binds 1 zinc ion per subunit.</text>
</comment>
<comment type="subcellular location">
    <subcellularLocation>
        <location evidence="1">Cytoplasm</location>
    </subcellularLocation>
</comment>
<comment type="domain">
    <text evidence="1">Consists of three domains; the N-terminal catalytic domain, the editing domain and the C-terminal C-Ala domain. The editing domain removes incorrectly charged amino acids, while the C-Ala domain, along with tRNA(Ala), serves as a bridge to cooperatively bring together the editing and aminoacylation centers thus stimulating deacylation of misacylated tRNAs.</text>
</comment>
<comment type="similarity">
    <text evidence="1">Belongs to the class-II aminoacyl-tRNA synthetase family.</text>
</comment>
<feature type="chain" id="PRO_0000347844" description="Alanine--tRNA ligase">
    <location>
        <begin position="1"/>
        <end position="885"/>
    </location>
</feature>
<feature type="binding site" evidence="1">
    <location>
        <position position="574"/>
    </location>
    <ligand>
        <name>Zn(2+)</name>
        <dbReference type="ChEBI" id="CHEBI:29105"/>
    </ligand>
</feature>
<feature type="binding site" evidence="1">
    <location>
        <position position="578"/>
    </location>
    <ligand>
        <name>Zn(2+)</name>
        <dbReference type="ChEBI" id="CHEBI:29105"/>
    </ligand>
</feature>
<feature type="binding site" evidence="1">
    <location>
        <position position="676"/>
    </location>
    <ligand>
        <name>Zn(2+)</name>
        <dbReference type="ChEBI" id="CHEBI:29105"/>
    </ligand>
</feature>
<feature type="binding site" evidence="1">
    <location>
        <position position="680"/>
    </location>
    <ligand>
        <name>Zn(2+)</name>
        <dbReference type="ChEBI" id="CHEBI:29105"/>
    </ligand>
</feature>
<keyword id="KW-0030">Aminoacyl-tRNA synthetase</keyword>
<keyword id="KW-0067">ATP-binding</keyword>
<keyword id="KW-0963">Cytoplasm</keyword>
<keyword id="KW-0436">Ligase</keyword>
<keyword id="KW-0479">Metal-binding</keyword>
<keyword id="KW-0547">Nucleotide-binding</keyword>
<keyword id="KW-0648">Protein biosynthesis</keyword>
<keyword id="KW-1185">Reference proteome</keyword>
<keyword id="KW-0694">RNA-binding</keyword>
<keyword id="KW-0820">tRNA-binding</keyword>
<keyword id="KW-0862">Zinc</keyword>
<evidence type="ECO:0000255" key="1">
    <source>
        <dbReference type="HAMAP-Rule" id="MF_00036"/>
    </source>
</evidence>
<protein>
    <recommendedName>
        <fullName evidence="1">Alanine--tRNA ligase</fullName>
        <ecNumber evidence="1">6.1.1.7</ecNumber>
    </recommendedName>
    <alternativeName>
        <fullName evidence="1">Alanyl-tRNA synthetase</fullName>
        <shortName evidence="1">AlaRS</shortName>
    </alternativeName>
</protein>
<proteinExistence type="inferred from homology"/>
<organism>
    <name type="scientific">Syntrophobacter fumaroxidans (strain DSM 10017 / MPOB)</name>
    <dbReference type="NCBI Taxonomy" id="335543"/>
    <lineage>
        <taxon>Bacteria</taxon>
        <taxon>Pseudomonadati</taxon>
        <taxon>Thermodesulfobacteriota</taxon>
        <taxon>Syntrophobacteria</taxon>
        <taxon>Syntrophobacterales</taxon>
        <taxon>Syntrophobacteraceae</taxon>
        <taxon>Syntrophobacter</taxon>
    </lineage>
</organism>
<dbReference type="EC" id="6.1.1.7" evidence="1"/>
<dbReference type="EMBL" id="CP000478">
    <property type="protein sequence ID" value="ABK18205.1"/>
    <property type="molecule type" value="Genomic_DNA"/>
</dbReference>
<dbReference type="RefSeq" id="WP_011699373.1">
    <property type="nucleotide sequence ID" value="NC_008554.1"/>
</dbReference>
<dbReference type="SMR" id="A0LLA3"/>
<dbReference type="FunCoup" id="A0LLA3">
    <property type="interactions" value="559"/>
</dbReference>
<dbReference type="STRING" id="335543.Sfum_2527"/>
<dbReference type="KEGG" id="sfu:Sfum_2527"/>
<dbReference type="eggNOG" id="COG0013">
    <property type="taxonomic scope" value="Bacteria"/>
</dbReference>
<dbReference type="HOGENOM" id="CLU_004485_1_1_7"/>
<dbReference type="InParanoid" id="A0LLA3"/>
<dbReference type="OrthoDB" id="9803884at2"/>
<dbReference type="Proteomes" id="UP000001784">
    <property type="component" value="Chromosome"/>
</dbReference>
<dbReference type="GO" id="GO:0005829">
    <property type="term" value="C:cytosol"/>
    <property type="evidence" value="ECO:0007669"/>
    <property type="project" value="TreeGrafter"/>
</dbReference>
<dbReference type="GO" id="GO:0004813">
    <property type="term" value="F:alanine-tRNA ligase activity"/>
    <property type="evidence" value="ECO:0007669"/>
    <property type="project" value="UniProtKB-UniRule"/>
</dbReference>
<dbReference type="GO" id="GO:0002161">
    <property type="term" value="F:aminoacyl-tRNA deacylase activity"/>
    <property type="evidence" value="ECO:0007669"/>
    <property type="project" value="TreeGrafter"/>
</dbReference>
<dbReference type="GO" id="GO:0005524">
    <property type="term" value="F:ATP binding"/>
    <property type="evidence" value="ECO:0007669"/>
    <property type="project" value="UniProtKB-UniRule"/>
</dbReference>
<dbReference type="GO" id="GO:0000049">
    <property type="term" value="F:tRNA binding"/>
    <property type="evidence" value="ECO:0007669"/>
    <property type="project" value="UniProtKB-KW"/>
</dbReference>
<dbReference type="GO" id="GO:0008270">
    <property type="term" value="F:zinc ion binding"/>
    <property type="evidence" value="ECO:0007669"/>
    <property type="project" value="UniProtKB-UniRule"/>
</dbReference>
<dbReference type="GO" id="GO:0006419">
    <property type="term" value="P:alanyl-tRNA aminoacylation"/>
    <property type="evidence" value="ECO:0007669"/>
    <property type="project" value="UniProtKB-UniRule"/>
</dbReference>
<dbReference type="GO" id="GO:0045892">
    <property type="term" value="P:negative regulation of DNA-templated transcription"/>
    <property type="evidence" value="ECO:0007669"/>
    <property type="project" value="TreeGrafter"/>
</dbReference>
<dbReference type="CDD" id="cd00673">
    <property type="entry name" value="AlaRS_core"/>
    <property type="match status" value="1"/>
</dbReference>
<dbReference type="FunFam" id="2.40.30.130:FF:000001">
    <property type="entry name" value="Alanine--tRNA ligase"/>
    <property type="match status" value="1"/>
</dbReference>
<dbReference type="FunFam" id="3.10.310.40:FF:000001">
    <property type="entry name" value="Alanine--tRNA ligase"/>
    <property type="match status" value="1"/>
</dbReference>
<dbReference type="FunFam" id="3.30.54.20:FF:000001">
    <property type="entry name" value="Alanine--tRNA ligase"/>
    <property type="match status" value="1"/>
</dbReference>
<dbReference type="FunFam" id="3.30.930.10:FF:000004">
    <property type="entry name" value="Alanine--tRNA ligase"/>
    <property type="match status" value="1"/>
</dbReference>
<dbReference type="FunFam" id="3.30.980.10:FF:000004">
    <property type="entry name" value="Alanine--tRNA ligase, cytoplasmic"/>
    <property type="match status" value="1"/>
</dbReference>
<dbReference type="Gene3D" id="2.40.30.130">
    <property type="match status" value="1"/>
</dbReference>
<dbReference type="Gene3D" id="3.10.310.40">
    <property type="match status" value="1"/>
</dbReference>
<dbReference type="Gene3D" id="3.30.54.20">
    <property type="match status" value="1"/>
</dbReference>
<dbReference type="Gene3D" id="6.10.250.550">
    <property type="match status" value="1"/>
</dbReference>
<dbReference type="Gene3D" id="3.30.930.10">
    <property type="entry name" value="Bira Bifunctional Protein, Domain 2"/>
    <property type="match status" value="1"/>
</dbReference>
<dbReference type="Gene3D" id="3.30.980.10">
    <property type="entry name" value="Threonyl-trna Synthetase, Chain A, domain 2"/>
    <property type="match status" value="1"/>
</dbReference>
<dbReference type="HAMAP" id="MF_00036_B">
    <property type="entry name" value="Ala_tRNA_synth_B"/>
    <property type="match status" value="1"/>
</dbReference>
<dbReference type="InterPro" id="IPR045864">
    <property type="entry name" value="aa-tRNA-synth_II/BPL/LPL"/>
</dbReference>
<dbReference type="InterPro" id="IPR002318">
    <property type="entry name" value="Ala-tRNA-lgiase_IIc"/>
</dbReference>
<dbReference type="InterPro" id="IPR018162">
    <property type="entry name" value="Ala-tRNA-ligase_IIc_anticod-bd"/>
</dbReference>
<dbReference type="InterPro" id="IPR018165">
    <property type="entry name" value="Ala-tRNA-synth_IIc_core"/>
</dbReference>
<dbReference type="InterPro" id="IPR018164">
    <property type="entry name" value="Ala-tRNA-synth_IIc_N"/>
</dbReference>
<dbReference type="InterPro" id="IPR050058">
    <property type="entry name" value="Ala-tRNA_ligase"/>
</dbReference>
<dbReference type="InterPro" id="IPR023033">
    <property type="entry name" value="Ala_tRNA_ligase_euk/bac"/>
</dbReference>
<dbReference type="InterPro" id="IPR003156">
    <property type="entry name" value="DHHA1_dom"/>
</dbReference>
<dbReference type="InterPro" id="IPR018163">
    <property type="entry name" value="Thr/Ala-tRNA-synth_IIc_edit"/>
</dbReference>
<dbReference type="InterPro" id="IPR009000">
    <property type="entry name" value="Transl_B-barrel_sf"/>
</dbReference>
<dbReference type="InterPro" id="IPR012947">
    <property type="entry name" value="tRNA_SAD"/>
</dbReference>
<dbReference type="NCBIfam" id="TIGR00344">
    <property type="entry name" value="alaS"/>
    <property type="match status" value="1"/>
</dbReference>
<dbReference type="PANTHER" id="PTHR11777:SF9">
    <property type="entry name" value="ALANINE--TRNA LIGASE, CYTOPLASMIC"/>
    <property type="match status" value="1"/>
</dbReference>
<dbReference type="PANTHER" id="PTHR11777">
    <property type="entry name" value="ALANYL-TRNA SYNTHETASE"/>
    <property type="match status" value="1"/>
</dbReference>
<dbReference type="Pfam" id="PF02272">
    <property type="entry name" value="DHHA1"/>
    <property type="match status" value="1"/>
</dbReference>
<dbReference type="Pfam" id="PF01411">
    <property type="entry name" value="tRNA-synt_2c"/>
    <property type="match status" value="1"/>
</dbReference>
<dbReference type="Pfam" id="PF07973">
    <property type="entry name" value="tRNA_SAD"/>
    <property type="match status" value="1"/>
</dbReference>
<dbReference type="PRINTS" id="PR00980">
    <property type="entry name" value="TRNASYNTHALA"/>
</dbReference>
<dbReference type="SMART" id="SM00863">
    <property type="entry name" value="tRNA_SAD"/>
    <property type="match status" value="1"/>
</dbReference>
<dbReference type="SUPFAM" id="SSF55681">
    <property type="entry name" value="Class II aaRS and biotin synthetases"/>
    <property type="match status" value="1"/>
</dbReference>
<dbReference type="SUPFAM" id="SSF101353">
    <property type="entry name" value="Putative anticodon-binding domain of alanyl-tRNA synthetase (AlaRS)"/>
    <property type="match status" value="1"/>
</dbReference>
<dbReference type="SUPFAM" id="SSF55186">
    <property type="entry name" value="ThrRS/AlaRS common domain"/>
    <property type="match status" value="1"/>
</dbReference>
<dbReference type="SUPFAM" id="SSF50447">
    <property type="entry name" value="Translation proteins"/>
    <property type="match status" value="1"/>
</dbReference>
<dbReference type="PROSITE" id="PS50860">
    <property type="entry name" value="AA_TRNA_LIGASE_II_ALA"/>
    <property type="match status" value="1"/>
</dbReference>
<name>SYA_SYNFM</name>